<dbReference type="EMBL" id="AF295330">
    <property type="protein sequence ID" value="AAG02236.1"/>
    <property type="molecule type" value="mRNA"/>
</dbReference>
<dbReference type="BMRB" id="P60303"/>
<dbReference type="SMR" id="P60303"/>
<dbReference type="GO" id="GO:0005576">
    <property type="term" value="C:extracellular region"/>
    <property type="evidence" value="ECO:0007669"/>
    <property type="project" value="UniProtKB-SubCell"/>
</dbReference>
<dbReference type="GO" id="GO:0016020">
    <property type="term" value="C:membrane"/>
    <property type="evidence" value="ECO:0007669"/>
    <property type="project" value="UniProtKB-KW"/>
</dbReference>
<dbReference type="GO" id="GO:0044218">
    <property type="term" value="C:other organism cell membrane"/>
    <property type="evidence" value="ECO:0007669"/>
    <property type="project" value="UniProtKB-KW"/>
</dbReference>
<dbReference type="GO" id="GO:0090729">
    <property type="term" value="F:toxin activity"/>
    <property type="evidence" value="ECO:0007669"/>
    <property type="project" value="UniProtKB-KW"/>
</dbReference>
<dbReference type="GO" id="GO:0031640">
    <property type="term" value="P:killing of cells of another organism"/>
    <property type="evidence" value="ECO:0007669"/>
    <property type="project" value="UniProtKB-KW"/>
</dbReference>
<dbReference type="CDD" id="cd00206">
    <property type="entry name" value="TFP_snake_toxin"/>
    <property type="match status" value="1"/>
</dbReference>
<dbReference type="FunFam" id="2.10.60.10:FF:000024">
    <property type="entry name" value="Cytotoxin 1"/>
    <property type="match status" value="1"/>
</dbReference>
<dbReference type="Gene3D" id="2.10.60.10">
    <property type="entry name" value="CD59"/>
    <property type="match status" value="1"/>
</dbReference>
<dbReference type="InterPro" id="IPR003572">
    <property type="entry name" value="Cytotoxin_Cobra"/>
</dbReference>
<dbReference type="InterPro" id="IPR003571">
    <property type="entry name" value="Snake_3FTx"/>
</dbReference>
<dbReference type="InterPro" id="IPR045860">
    <property type="entry name" value="Snake_toxin-like_sf"/>
</dbReference>
<dbReference type="InterPro" id="IPR018354">
    <property type="entry name" value="Snake_toxin_con_site"/>
</dbReference>
<dbReference type="InterPro" id="IPR054131">
    <property type="entry name" value="Toxin_cobra-type"/>
</dbReference>
<dbReference type="Pfam" id="PF21947">
    <property type="entry name" value="Toxin_cobra-type"/>
    <property type="match status" value="1"/>
</dbReference>
<dbReference type="PRINTS" id="PR00282">
    <property type="entry name" value="CYTOTOXIN"/>
</dbReference>
<dbReference type="SUPFAM" id="SSF57302">
    <property type="entry name" value="Snake toxin-like"/>
    <property type="match status" value="1"/>
</dbReference>
<dbReference type="PROSITE" id="PS00272">
    <property type="entry name" value="SNAKE_TOXIN"/>
    <property type="match status" value="1"/>
</dbReference>
<sequence>MKTLLLTLVVVTIVCLDLGYTLKCNKLVPLFYKTCPAGKNLCYKMFMVATPKVPVKRGCIDVCPKSSLLVKYVCCNTDRCN</sequence>
<protein>
    <recommendedName>
        <fullName>Cytotoxin 4</fullName>
    </recommendedName>
    <alternativeName>
        <fullName>Cytotoxin IV</fullName>
    </alternativeName>
    <alternativeName>
        <fullName evidence="5">Siamextin</fullName>
    </alternativeName>
</protein>
<organism>
    <name type="scientific">Naja kaouthia</name>
    <name type="common">Monocled cobra</name>
    <name type="synonym">Naja siamensis</name>
    <dbReference type="NCBI Taxonomy" id="8649"/>
    <lineage>
        <taxon>Eukaryota</taxon>
        <taxon>Metazoa</taxon>
        <taxon>Chordata</taxon>
        <taxon>Craniata</taxon>
        <taxon>Vertebrata</taxon>
        <taxon>Euteleostomi</taxon>
        <taxon>Lepidosauria</taxon>
        <taxon>Squamata</taxon>
        <taxon>Bifurcata</taxon>
        <taxon>Unidentata</taxon>
        <taxon>Episquamata</taxon>
        <taxon>Toxicofera</taxon>
        <taxon>Serpentes</taxon>
        <taxon>Colubroidea</taxon>
        <taxon>Elapidae</taxon>
        <taxon>Elapinae</taxon>
        <taxon>Naja</taxon>
    </lineage>
</organism>
<proteinExistence type="evidence at protein level"/>
<comment type="function">
    <text evidence="1 2">Shows cytolytic activity on many different cells by forming pore in lipid membranes. In vivo, increases heart rate or kills the animal by cardiac arrest. In addition, it binds to heparin with high affinity, interacts with Kv channel-interacting protein 1 (KCNIP1) in a calcium-independent manner, and binds to integrin alpha-V/beta-3 (ITGAV/ITGB3) with moderate affinity.</text>
</comment>
<comment type="subunit">
    <text evidence="1">Monomer in solution; Homodimer and oligomer in the presence of negatively charged lipids forming a pore with a size ranging between 20 and 30 Angstroms.</text>
</comment>
<comment type="subcellular location">
    <subcellularLocation>
        <location evidence="4">Secreted</location>
    </subcellularLocation>
    <subcellularLocation>
        <location evidence="1">Target cell membrane</location>
    </subcellularLocation>
</comment>
<comment type="tissue specificity">
    <text evidence="6">Expressed by the venom gland.</text>
</comment>
<comment type="toxic dose">
    <text>LD(50) is 1.48 mg/kg by intraperitoneal injection.</text>
</comment>
<comment type="miscellaneous">
    <text evidence="6">Is classified as a P-type cytotoxin, since a proline residue stands at position 51 (Pro-31 in standard classification).</text>
</comment>
<comment type="similarity">
    <text evidence="6">Belongs to the three-finger toxin family. Short-chain subfamily. Type IA cytotoxin sub-subfamily.</text>
</comment>
<feature type="signal peptide" evidence="3 4">
    <location>
        <begin position="1"/>
        <end position="21"/>
    </location>
</feature>
<feature type="chain" id="PRO_0000035390" description="Cytotoxin 4" evidence="3 4">
    <location>
        <begin position="22"/>
        <end position="81"/>
    </location>
</feature>
<feature type="disulfide bond" evidence="1">
    <location>
        <begin position="24"/>
        <end position="42"/>
    </location>
</feature>
<feature type="disulfide bond" evidence="1">
    <location>
        <begin position="35"/>
        <end position="59"/>
    </location>
</feature>
<feature type="disulfide bond" evidence="1">
    <location>
        <begin position="63"/>
        <end position="74"/>
    </location>
</feature>
<feature type="disulfide bond" evidence="1">
    <location>
        <begin position="75"/>
        <end position="80"/>
    </location>
</feature>
<feature type="sequence conflict" description="In Ref. 4; AA sequence." evidence="6" ref="4">
    <original>T</original>
    <variation>Q</variation>
    <location>
        <position position="77"/>
    </location>
</feature>
<name>3SA4_NAJKA</name>
<reference key="1">
    <citation type="submission" date="2000-08" db="EMBL/GenBank/DDBJ databases">
        <title>Molecular cloning and sequence analysis of cDNA of cytotoxin analog of Naja kaouthia.</title>
        <authorList>
            <person name="Li K.J."/>
            <person name="Wei J.F."/>
            <person name="Jin Y."/>
            <person name="Lu Q.M."/>
            <person name="Xiong Y.L."/>
            <person name="Wang W.Y."/>
        </authorList>
    </citation>
    <scope>NUCLEOTIDE SEQUENCE [MRNA]</scope>
    <source>
        <tissue>Venom gland</tissue>
    </source>
</reference>
<reference key="2">
    <citation type="journal article" date="1989" name="Int. J. Pept. Protein Res.">
        <title>Sequence characterization of venom toxins from Thailand cobra.</title>
        <authorList>
            <person name="Chiou S.-H."/>
            <person name="Lin W.-W."/>
            <person name="Chang W.-P."/>
        </authorList>
    </citation>
    <scope>PROTEIN SEQUENCE OF 22-81</scope>
    <scope>SUBCELLULAR LOCATION</scope>
    <source>
        <tissue>Venom</tissue>
    </source>
</reference>
<reference key="3">
    <citation type="journal article" date="1988" name="Biochim. Biophys. Acta">
        <title>Amino-acid sequences of four cytotoxins (cytotoxins I, II, III and IV) purified from the venom of the Thailand cobra, Naja naja siamensis.</title>
        <authorList>
            <person name="Ohkura K."/>
            <person name="Inoue S."/>
            <person name="Ikeda K."/>
            <person name="Hayashi K."/>
        </authorList>
    </citation>
    <scope>PROTEIN SEQUENCE OF 22-81</scope>
    <source>
        <tissue>Venom</tissue>
    </source>
</reference>
<reference key="4">
    <citation type="journal article" date="2016" name="Sci. Rep.">
        <title>Exactin: a specific inhibitor of Factor X activation by extrinsic tenase complex from the venom of Hemachatus haemachatus.</title>
        <authorList>
            <person name="Girish V.M."/>
            <person name="Kini R.M."/>
        </authorList>
    </citation>
    <scope>PROTEIN SEQUENCE</scope>
    <scope>NOMENCLATURE</scope>
</reference>
<accession>P60303</accession>
<accession>P01444</accession>
<evidence type="ECO:0000250" key="1">
    <source>
        <dbReference type="UniProtKB" id="P60301"/>
    </source>
</evidence>
<evidence type="ECO:0000250" key="2">
    <source>
        <dbReference type="UniProtKB" id="P60304"/>
    </source>
</evidence>
<evidence type="ECO:0000269" key="3">
    <source>
    </source>
</evidence>
<evidence type="ECO:0000269" key="4">
    <source>
    </source>
</evidence>
<evidence type="ECO:0000303" key="5">
    <source>
    </source>
</evidence>
<evidence type="ECO:0000305" key="6"/>
<keyword id="KW-0123">Cardiotoxin</keyword>
<keyword id="KW-0204">Cytolysis</keyword>
<keyword id="KW-0903">Direct protein sequencing</keyword>
<keyword id="KW-1015">Disulfide bond</keyword>
<keyword id="KW-0472">Membrane</keyword>
<keyword id="KW-0964">Secreted</keyword>
<keyword id="KW-0732">Signal</keyword>
<keyword id="KW-1052">Target cell membrane</keyword>
<keyword id="KW-1053">Target membrane</keyword>
<keyword id="KW-0800">Toxin</keyword>